<gene>
    <name evidence="2" type="primary">arcA</name>
    <name type="synonym">sagP</name>
    <name type="ordered locus">SPs0666</name>
</gene>
<name>ARCA_STRPQ</name>
<comment type="catalytic activity">
    <reaction evidence="2">
        <text>L-arginine + H2O = L-citrulline + NH4(+)</text>
        <dbReference type="Rhea" id="RHEA:19597"/>
        <dbReference type="ChEBI" id="CHEBI:15377"/>
        <dbReference type="ChEBI" id="CHEBI:28938"/>
        <dbReference type="ChEBI" id="CHEBI:32682"/>
        <dbReference type="ChEBI" id="CHEBI:57743"/>
        <dbReference type="EC" id="3.5.3.6"/>
    </reaction>
</comment>
<comment type="pathway">
    <text evidence="2">Amino-acid degradation; L-arginine degradation via ADI pathway; carbamoyl phosphate from L-arginine: step 1/2.</text>
</comment>
<comment type="subcellular location">
    <subcellularLocation>
        <location evidence="2">Cytoplasm</location>
    </subcellularLocation>
</comment>
<comment type="PTM">
    <text evidence="1">Glycosylated.</text>
</comment>
<comment type="similarity">
    <text evidence="2">Belongs to the arginine deiminase family.</text>
</comment>
<keyword id="KW-0056">Arginine metabolism</keyword>
<keyword id="KW-0963">Cytoplasm</keyword>
<keyword id="KW-0325">Glycoprotein</keyword>
<keyword id="KW-0378">Hydrolase</keyword>
<dbReference type="EC" id="3.5.3.6" evidence="2"/>
<dbReference type="EMBL" id="BA000034">
    <property type="protein sequence ID" value="BAC63761.1"/>
    <property type="molecule type" value="Genomic_DNA"/>
</dbReference>
<dbReference type="RefSeq" id="WP_011054721.1">
    <property type="nucleotide sequence ID" value="NC_004606.1"/>
</dbReference>
<dbReference type="SMR" id="P0CZ65"/>
<dbReference type="KEGG" id="sps:SPs0666"/>
<dbReference type="HOGENOM" id="CLU_052662_0_1_9"/>
<dbReference type="UniPathway" id="UPA00254">
    <property type="reaction ID" value="UER00364"/>
</dbReference>
<dbReference type="GO" id="GO:0005737">
    <property type="term" value="C:cytoplasm"/>
    <property type="evidence" value="ECO:0007669"/>
    <property type="project" value="UniProtKB-SubCell"/>
</dbReference>
<dbReference type="GO" id="GO:0016990">
    <property type="term" value="F:arginine deiminase activity"/>
    <property type="evidence" value="ECO:0007669"/>
    <property type="project" value="UniProtKB-UniRule"/>
</dbReference>
<dbReference type="GO" id="GO:0019547">
    <property type="term" value="P:arginine catabolic process to ornithine"/>
    <property type="evidence" value="ECO:0007669"/>
    <property type="project" value="UniProtKB-UniRule"/>
</dbReference>
<dbReference type="GO" id="GO:0019546">
    <property type="term" value="P:arginine deiminase pathway"/>
    <property type="evidence" value="ECO:0007669"/>
    <property type="project" value="TreeGrafter"/>
</dbReference>
<dbReference type="Gene3D" id="1.10.3930.10">
    <property type="entry name" value="Arginine deiminase"/>
    <property type="match status" value="1"/>
</dbReference>
<dbReference type="Gene3D" id="3.75.10.10">
    <property type="entry name" value="L-arginine/glycine Amidinotransferase, Chain A"/>
    <property type="match status" value="1"/>
</dbReference>
<dbReference type="HAMAP" id="MF_00242">
    <property type="entry name" value="Arg_deiminase"/>
    <property type="match status" value="1"/>
</dbReference>
<dbReference type="InterPro" id="IPR003876">
    <property type="entry name" value="Arg_deiminase"/>
</dbReference>
<dbReference type="NCBIfam" id="TIGR01078">
    <property type="entry name" value="arcA"/>
    <property type="match status" value="1"/>
</dbReference>
<dbReference type="NCBIfam" id="NF002381">
    <property type="entry name" value="PRK01388.1"/>
    <property type="match status" value="1"/>
</dbReference>
<dbReference type="PANTHER" id="PTHR47271">
    <property type="entry name" value="ARGININE DEIMINASE"/>
    <property type="match status" value="1"/>
</dbReference>
<dbReference type="PANTHER" id="PTHR47271:SF2">
    <property type="entry name" value="ARGININE DEIMINASE"/>
    <property type="match status" value="1"/>
</dbReference>
<dbReference type="Pfam" id="PF02274">
    <property type="entry name" value="ADI"/>
    <property type="match status" value="1"/>
</dbReference>
<dbReference type="PIRSF" id="PIRSF006356">
    <property type="entry name" value="Arg_deiminase"/>
    <property type="match status" value="1"/>
</dbReference>
<dbReference type="PRINTS" id="PR01466">
    <property type="entry name" value="ARGDEIMINASE"/>
</dbReference>
<dbReference type="SUPFAM" id="SSF55909">
    <property type="entry name" value="Pentein"/>
    <property type="match status" value="1"/>
</dbReference>
<sequence length="411" mass="46256">MTAQTPIHVYSEIGKLKKVLLHRPGKEIENLMPDYLERLLFDDIPFLEDAQKEHDAFAQALRDEGIEVLYLETLAAESLVTPEIREAFIDEYLSEANIRGRATKKAIRELLMAIEDNQELIEKTMAGVQKSELPEIPASEKGLTDLVESSYPFAIDPMPNLYFTRDPFATIGTGVSLNHMFSETRNRETLYGKYIFTHHPIYGGGKVPMVYDRNETTRIEGGDELVLSKDVLAVGISQRTDAASIEKLLVNIFKQNLGFKKVLAFEFANNRKFMHLDTVFTMVDYDKFTIHPEIEGDLRVYSVTYDNEELHIVEEKGDLADLLAANLGVEKVDLIRCGGDNLVAAGREQWNDGSNTLTIAPGVVVVYNRNTITNAILESKGLKLIKIHGSELVRGRGGPRCMSMPFEREDI</sequence>
<reference key="1">
    <citation type="journal article" date="2003" name="Genome Res.">
        <title>Genome sequence of an M3 strain of Streptococcus pyogenes reveals a large-scale genomic rearrangement in invasive strains and new insights into phage evolution.</title>
        <authorList>
            <person name="Nakagawa I."/>
            <person name="Kurokawa K."/>
            <person name="Yamashita A."/>
            <person name="Nakata M."/>
            <person name="Tomiyasu Y."/>
            <person name="Okahashi N."/>
            <person name="Kawabata S."/>
            <person name="Yamazaki K."/>
            <person name="Shiba T."/>
            <person name="Yasunaga T."/>
            <person name="Hayashi H."/>
            <person name="Hattori M."/>
            <person name="Hamada S."/>
        </authorList>
    </citation>
    <scope>NUCLEOTIDE SEQUENCE [LARGE SCALE GENOMIC DNA]</scope>
    <source>
        <strain>SSI-1</strain>
    </source>
</reference>
<feature type="initiator methionine" description="Removed" evidence="1">
    <location>
        <position position="1"/>
    </location>
</feature>
<feature type="chain" id="PRO_0000411270" description="Arginine deiminase">
    <location>
        <begin position="2"/>
        <end position="411"/>
    </location>
</feature>
<feature type="active site" description="Amidino-cysteine intermediate" evidence="2">
    <location>
        <position position="401"/>
    </location>
</feature>
<evidence type="ECO:0000250" key="1"/>
<evidence type="ECO:0000255" key="2">
    <source>
        <dbReference type="HAMAP-Rule" id="MF_00242"/>
    </source>
</evidence>
<protein>
    <recommendedName>
        <fullName evidence="2">Arginine deiminase</fullName>
        <shortName evidence="2">ADI</shortName>
        <ecNumber evidence="2">3.5.3.6</ecNumber>
    </recommendedName>
    <alternativeName>
        <fullName evidence="2">Arginine dihydrolase</fullName>
        <shortName evidence="2">AD</shortName>
    </alternativeName>
    <alternativeName>
        <fullName>Streptococcal acid glycoprotein</fullName>
    </alternativeName>
</protein>
<accession>P0CZ65</accession>
<accession>Q8K5F0</accession>
<organism>
    <name type="scientific">Streptococcus pyogenes serotype M3 (strain SSI-1)</name>
    <dbReference type="NCBI Taxonomy" id="193567"/>
    <lineage>
        <taxon>Bacteria</taxon>
        <taxon>Bacillati</taxon>
        <taxon>Bacillota</taxon>
        <taxon>Bacilli</taxon>
        <taxon>Lactobacillales</taxon>
        <taxon>Streptococcaceae</taxon>
        <taxon>Streptococcus</taxon>
    </lineage>
</organism>
<proteinExistence type="inferred from homology"/>